<sequence length="461" mass="52268">MPMLKIYNSITRQKQEFKPITPGKVGMYVCGVTVYDLCHIGHGRTFVSFDMIVRYLRYAGYEVNFQRNITDIDDKIIKRANENQEDCNTLTDRLIGEMHKDFDALNMIRPDFEPRATLHIAEIIDMVERLLARGHAYVAADGDVLFSVASFPEYGRLSGQNLEQLQAGARVEVDDNKQNPMDFVLWKMSKPGEPTWESPWGPGRPGWHIECSAMNSKHLGLHFDIHGGGSDLQFPHHENEIAQSCCAHDTPYVNYWMHTGMVMVDREKMSKSLGNFFTIRDVLGHYDAETVRYFLLSGHYRSQINYSEENLKQARAALERLYTAIKDVDLTVTAAPAEEFVAKFKAAMDDDFNTPEAYSVLFDMVREINRLKTTDMAQASAMAVAMKQLADVLGLLHQAPDAFFKGEGSDDEVAEIEALIVERNRARAEKDWPAADVARNRLNELGVVLEDGPSGTTWRKK</sequence>
<reference key="1">
    <citation type="submission" date="2006-09" db="EMBL/GenBank/DDBJ databases">
        <title>Complete sequence of chromosome 1 of Shewanella sp. ANA-3.</title>
        <authorList>
            <person name="Copeland A."/>
            <person name="Lucas S."/>
            <person name="Lapidus A."/>
            <person name="Barry K."/>
            <person name="Detter J.C."/>
            <person name="Glavina del Rio T."/>
            <person name="Hammon N."/>
            <person name="Israni S."/>
            <person name="Dalin E."/>
            <person name="Tice H."/>
            <person name="Pitluck S."/>
            <person name="Chertkov O."/>
            <person name="Brettin T."/>
            <person name="Bruce D."/>
            <person name="Han C."/>
            <person name="Tapia R."/>
            <person name="Gilna P."/>
            <person name="Schmutz J."/>
            <person name="Larimer F."/>
            <person name="Land M."/>
            <person name="Hauser L."/>
            <person name="Kyrpides N."/>
            <person name="Kim E."/>
            <person name="Newman D."/>
            <person name="Salticov C."/>
            <person name="Konstantinidis K."/>
            <person name="Klappenback J."/>
            <person name="Tiedje J."/>
            <person name="Richardson P."/>
        </authorList>
    </citation>
    <scope>NUCLEOTIDE SEQUENCE [LARGE SCALE GENOMIC DNA]</scope>
    <source>
        <strain>ANA-3</strain>
    </source>
</reference>
<organism>
    <name type="scientific">Shewanella sp. (strain ANA-3)</name>
    <dbReference type="NCBI Taxonomy" id="94122"/>
    <lineage>
        <taxon>Bacteria</taxon>
        <taxon>Pseudomonadati</taxon>
        <taxon>Pseudomonadota</taxon>
        <taxon>Gammaproteobacteria</taxon>
        <taxon>Alteromonadales</taxon>
        <taxon>Shewanellaceae</taxon>
        <taxon>Shewanella</taxon>
    </lineage>
</organism>
<accession>A0KYM2</accession>
<dbReference type="EC" id="6.1.1.16" evidence="1"/>
<dbReference type="EMBL" id="CP000469">
    <property type="protein sequence ID" value="ABK48891.1"/>
    <property type="molecule type" value="Genomic_DNA"/>
</dbReference>
<dbReference type="SMR" id="A0KYM2"/>
<dbReference type="STRING" id="94122.Shewana3_2664"/>
<dbReference type="KEGG" id="shn:Shewana3_2664"/>
<dbReference type="eggNOG" id="COG0215">
    <property type="taxonomic scope" value="Bacteria"/>
</dbReference>
<dbReference type="HOGENOM" id="CLU_013528_0_1_6"/>
<dbReference type="Proteomes" id="UP000002589">
    <property type="component" value="Chromosome"/>
</dbReference>
<dbReference type="GO" id="GO:0005829">
    <property type="term" value="C:cytosol"/>
    <property type="evidence" value="ECO:0007669"/>
    <property type="project" value="TreeGrafter"/>
</dbReference>
<dbReference type="GO" id="GO:0005524">
    <property type="term" value="F:ATP binding"/>
    <property type="evidence" value="ECO:0007669"/>
    <property type="project" value="UniProtKB-UniRule"/>
</dbReference>
<dbReference type="GO" id="GO:0004817">
    <property type="term" value="F:cysteine-tRNA ligase activity"/>
    <property type="evidence" value="ECO:0007669"/>
    <property type="project" value="UniProtKB-UniRule"/>
</dbReference>
<dbReference type="GO" id="GO:0008270">
    <property type="term" value="F:zinc ion binding"/>
    <property type="evidence" value="ECO:0007669"/>
    <property type="project" value="UniProtKB-UniRule"/>
</dbReference>
<dbReference type="GO" id="GO:0006423">
    <property type="term" value="P:cysteinyl-tRNA aminoacylation"/>
    <property type="evidence" value="ECO:0007669"/>
    <property type="project" value="UniProtKB-UniRule"/>
</dbReference>
<dbReference type="CDD" id="cd07963">
    <property type="entry name" value="Anticodon_Ia_Cys"/>
    <property type="match status" value="1"/>
</dbReference>
<dbReference type="CDD" id="cd00672">
    <property type="entry name" value="CysRS_core"/>
    <property type="match status" value="1"/>
</dbReference>
<dbReference type="FunFam" id="1.20.120.1910:FF:000001">
    <property type="entry name" value="Cysteine--tRNA ligase"/>
    <property type="match status" value="1"/>
</dbReference>
<dbReference type="FunFam" id="3.40.50.620:FF:000009">
    <property type="entry name" value="Cysteine--tRNA ligase"/>
    <property type="match status" value="1"/>
</dbReference>
<dbReference type="Gene3D" id="1.20.120.1910">
    <property type="entry name" value="Cysteine-tRNA ligase, C-terminal anti-codon recognition domain"/>
    <property type="match status" value="1"/>
</dbReference>
<dbReference type="Gene3D" id="3.40.50.620">
    <property type="entry name" value="HUPs"/>
    <property type="match status" value="1"/>
</dbReference>
<dbReference type="HAMAP" id="MF_00041">
    <property type="entry name" value="Cys_tRNA_synth"/>
    <property type="match status" value="1"/>
</dbReference>
<dbReference type="InterPro" id="IPR015803">
    <property type="entry name" value="Cys-tRNA-ligase"/>
</dbReference>
<dbReference type="InterPro" id="IPR015273">
    <property type="entry name" value="Cys-tRNA-synt_Ia_DALR"/>
</dbReference>
<dbReference type="InterPro" id="IPR024909">
    <property type="entry name" value="Cys-tRNA/MSH_ligase"/>
</dbReference>
<dbReference type="InterPro" id="IPR056411">
    <property type="entry name" value="CysS_C"/>
</dbReference>
<dbReference type="InterPro" id="IPR014729">
    <property type="entry name" value="Rossmann-like_a/b/a_fold"/>
</dbReference>
<dbReference type="InterPro" id="IPR032678">
    <property type="entry name" value="tRNA-synt_1_cat_dom"/>
</dbReference>
<dbReference type="InterPro" id="IPR009080">
    <property type="entry name" value="tRNAsynth_Ia_anticodon-bd"/>
</dbReference>
<dbReference type="NCBIfam" id="TIGR00435">
    <property type="entry name" value="cysS"/>
    <property type="match status" value="1"/>
</dbReference>
<dbReference type="PANTHER" id="PTHR10890:SF3">
    <property type="entry name" value="CYSTEINE--TRNA LIGASE, CYTOPLASMIC"/>
    <property type="match status" value="1"/>
</dbReference>
<dbReference type="PANTHER" id="PTHR10890">
    <property type="entry name" value="CYSTEINYL-TRNA SYNTHETASE"/>
    <property type="match status" value="1"/>
</dbReference>
<dbReference type="Pfam" id="PF23493">
    <property type="entry name" value="CysS_C"/>
    <property type="match status" value="1"/>
</dbReference>
<dbReference type="Pfam" id="PF09190">
    <property type="entry name" value="DALR_2"/>
    <property type="match status" value="1"/>
</dbReference>
<dbReference type="Pfam" id="PF01406">
    <property type="entry name" value="tRNA-synt_1e"/>
    <property type="match status" value="1"/>
</dbReference>
<dbReference type="PRINTS" id="PR00983">
    <property type="entry name" value="TRNASYNTHCYS"/>
</dbReference>
<dbReference type="SMART" id="SM00840">
    <property type="entry name" value="DALR_2"/>
    <property type="match status" value="1"/>
</dbReference>
<dbReference type="SUPFAM" id="SSF47323">
    <property type="entry name" value="Anticodon-binding domain of a subclass of class I aminoacyl-tRNA synthetases"/>
    <property type="match status" value="1"/>
</dbReference>
<dbReference type="SUPFAM" id="SSF52374">
    <property type="entry name" value="Nucleotidylyl transferase"/>
    <property type="match status" value="1"/>
</dbReference>
<proteinExistence type="inferred from homology"/>
<feature type="chain" id="PRO_1000006609" description="Cysteine--tRNA ligase">
    <location>
        <begin position="1"/>
        <end position="461"/>
    </location>
</feature>
<feature type="short sequence motif" description="'HIGH' region">
    <location>
        <begin position="32"/>
        <end position="42"/>
    </location>
</feature>
<feature type="short sequence motif" description="'KMSKS' region">
    <location>
        <begin position="268"/>
        <end position="272"/>
    </location>
</feature>
<feature type="binding site" evidence="1">
    <location>
        <position position="30"/>
    </location>
    <ligand>
        <name>Zn(2+)</name>
        <dbReference type="ChEBI" id="CHEBI:29105"/>
    </ligand>
</feature>
<feature type="binding site" evidence="1">
    <location>
        <position position="211"/>
    </location>
    <ligand>
        <name>Zn(2+)</name>
        <dbReference type="ChEBI" id="CHEBI:29105"/>
    </ligand>
</feature>
<feature type="binding site" evidence="1">
    <location>
        <position position="236"/>
    </location>
    <ligand>
        <name>Zn(2+)</name>
        <dbReference type="ChEBI" id="CHEBI:29105"/>
    </ligand>
</feature>
<feature type="binding site" evidence="1">
    <location>
        <position position="240"/>
    </location>
    <ligand>
        <name>Zn(2+)</name>
        <dbReference type="ChEBI" id="CHEBI:29105"/>
    </ligand>
</feature>
<feature type="binding site" evidence="1">
    <location>
        <position position="271"/>
    </location>
    <ligand>
        <name>ATP</name>
        <dbReference type="ChEBI" id="CHEBI:30616"/>
    </ligand>
</feature>
<protein>
    <recommendedName>
        <fullName evidence="1">Cysteine--tRNA ligase</fullName>
        <ecNumber evidence="1">6.1.1.16</ecNumber>
    </recommendedName>
    <alternativeName>
        <fullName evidence="1">Cysteinyl-tRNA synthetase</fullName>
        <shortName evidence="1">CysRS</shortName>
    </alternativeName>
</protein>
<keyword id="KW-0030">Aminoacyl-tRNA synthetase</keyword>
<keyword id="KW-0067">ATP-binding</keyword>
<keyword id="KW-0963">Cytoplasm</keyword>
<keyword id="KW-0436">Ligase</keyword>
<keyword id="KW-0479">Metal-binding</keyword>
<keyword id="KW-0547">Nucleotide-binding</keyword>
<keyword id="KW-0648">Protein biosynthesis</keyword>
<keyword id="KW-0862">Zinc</keyword>
<comment type="catalytic activity">
    <reaction evidence="1">
        <text>tRNA(Cys) + L-cysteine + ATP = L-cysteinyl-tRNA(Cys) + AMP + diphosphate</text>
        <dbReference type="Rhea" id="RHEA:17773"/>
        <dbReference type="Rhea" id="RHEA-COMP:9661"/>
        <dbReference type="Rhea" id="RHEA-COMP:9679"/>
        <dbReference type="ChEBI" id="CHEBI:30616"/>
        <dbReference type="ChEBI" id="CHEBI:33019"/>
        <dbReference type="ChEBI" id="CHEBI:35235"/>
        <dbReference type="ChEBI" id="CHEBI:78442"/>
        <dbReference type="ChEBI" id="CHEBI:78517"/>
        <dbReference type="ChEBI" id="CHEBI:456215"/>
        <dbReference type="EC" id="6.1.1.16"/>
    </reaction>
</comment>
<comment type="cofactor">
    <cofactor evidence="1">
        <name>Zn(2+)</name>
        <dbReference type="ChEBI" id="CHEBI:29105"/>
    </cofactor>
    <text evidence="1">Binds 1 zinc ion per subunit.</text>
</comment>
<comment type="subunit">
    <text evidence="1">Monomer.</text>
</comment>
<comment type="subcellular location">
    <subcellularLocation>
        <location evidence="1">Cytoplasm</location>
    </subcellularLocation>
</comment>
<comment type="similarity">
    <text evidence="1">Belongs to the class-I aminoacyl-tRNA synthetase family.</text>
</comment>
<name>SYC_SHESA</name>
<evidence type="ECO:0000255" key="1">
    <source>
        <dbReference type="HAMAP-Rule" id="MF_00041"/>
    </source>
</evidence>
<gene>
    <name evidence="1" type="primary">cysS</name>
    <name type="ordered locus">Shewana3_2664</name>
</gene>